<proteinExistence type="evidence at protein level"/>
<dbReference type="EC" id="2.4.1.40" evidence="3"/>
<dbReference type="EC" id="2.4.1.37" evidence="3"/>
<dbReference type="EMBL" id="AY228143">
    <property type="protein sequence ID" value="AAO72725.1"/>
    <property type="molecule type" value="mRNA"/>
</dbReference>
<dbReference type="EMBL" id="AB081652">
    <property type="protein sequence ID" value="BAC16248.1"/>
    <property type="molecule type" value="mRNA"/>
</dbReference>
<dbReference type="RefSeq" id="NP_001153735.1">
    <property type="nucleotide sequence ID" value="NM_001160263.1"/>
</dbReference>
<dbReference type="SMR" id="Q8CFC4"/>
<dbReference type="FunCoup" id="Q8CFC4">
    <property type="interactions" value="1"/>
</dbReference>
<dbReference type="STRING" id="10116.ENSRNOP00000039997"/>
<dbReference type="CAZy" id="GT6">
    <property type="family name" value="Glycosyltransferase Family 6"/>
</dbReference>
<dbReference type="GlyCosmos" id="Q8CFC4">
    <property type="glycosylation" value="1 site, No reported glycans"/>
</dbReference>
<dbReference type="GlyGen" id="Q8CFC4">
    <property type="glycosylation" value="1 site"/>
</dbReference>
<dbReference type="PhosphoSitePlus" id="Q8CFC4"/>
<dbReference type="PaxDb" id="10116-ENSRNOP00000039997"/>
<dbReference type="Ensembl" id="ENSRNOT00000044775.5">
    <property type="protein sequence ID" value="ENSRNOP00000039997.3"/>
    <property type="gene ID" value="ENSRNOG00000046958.3"/>
</dbReference>
<dbReference type="GeneID" id="100301568"/>
<dbReference type="KEGG" id="rno:100301568"/>
<dbReference type="UCSC" id="RGD:2307241">
    <property type="organism name" value="rat"/>
</dbReference>
<dbReference type="AGR" id="RGD:2307241"/>
<dbReference type="CTD" id="28"/>
<dbReference type="RGD" id="2307241">
    <property type="gene designation" value="Abo2"/>
</dbReference>
<dbReference type="eggNOG" id="ENOG502QQAJ">
    <property type="taxonomic scope" value="Eukaryota"/>
</dbReference>
<dbReference type="GeneTree" id="ENSGT00950000182858"/>
<dbReference type="HOGENOM" id="CLU_062445_0_1_1"/>
<dbReference type="InParanoid" id="Q8CFC4"/>
<dbReference type="OrthoDB" id="37726at9989"/>
<dbReference type="PhylomeDB" id="Q8CFC4"/>
<dbReference type="TreeFam" id="TF330991"/>
<dbReference type="BRENDA" id="2.4.1.37">
    <property type="organism ID" value="5301"/>
</dbReference>
<dbReference type="Reactome" id="R-RNO-9033807">
    <property type="pathway name" value="ABO blood group biosynthesis"/>
</dbReference>
<dbReference type="UniPathway" id="UPA00378"/>
<dbReference type="PRO" id="PR:Q8CFC4"/>
<dbReference type="Proteomes" id="UP000002494">
    <property type="component" value="Chromosome 3"/>
</dbReference>
<dbReference type="Bgee" id="ENSRNOG00000046958">
    <property type="expression patterns" value="Expressed in stomach and 19 other cell types or tissues"/>
</dbReference>
<dbReference type="GO" id="GO:0005576">
    <property type="term" value="C:extracellular region"/>
    <property type="evidence" value="ECO:0007669"/>
    <property type="project" value="UniProtKB-SubCell"/>
</dbReference>
<dbReference type="GO" id="GO:0005794">
    <property type="term" value="C:Golgi apparatus"/>
    <property type="evidence" value="ECO:0000318"/>
    <property type="project" value="GO_Central"/>
</dbReference>
<dbReference type="GO" id="GO:0032580">
    <property type="term" value="C:Golgi cisterna membrane"/>
    <property type="evidence" value="ECO:0007669"/>
    <property type="project" value="UniProtKB-SubCell"/>
</dbReference>
<dbReference type="GO" id="GO:0031982">
    <property type="term" value="C:vesicle"/>
    <property type="evidence" value="ECO:0000318"/>
    <property type="project" value="GO_Central"/>
</dbReference>
<dbReference type="GO" id="GO:0001962">
    <property type="term" value="F:alpha-1,3-galactosyltransferase activity"/>
    <property type="evidence" value="ECO:0000314"/>
    <property type="project" value="RGD"/>
</dbReference>
<dbReference type="GO" id="GO:0003823">
    <property type="term" value="F:antigen binding"/>
    <property type="evidence" value="ECO:0000266"/>
    <property type="project" value="RGD"/>
</dbReference>
<dbReference type="GO" id="GO:0004381">
    <property type="term" value="F:fucosylgalactoside 3-alpha-galactosyltransferase activity"/>
    <property type="evidence" value="ECO:0000266"/>
    <property type="project" value="RGD"/>
</dbReference>
<dbReference type="GO" id="GO:0004380">
    <property type="term" value="F:glycoprotein-fucosylgalactoside alpha-N-acetylgalactosaminyltransferase activity"/>
    <property type="evidence" value="ECO:0000314"/>
    <property type="project" value="RGD"/>
</dbReference>
<dbReference type="GO" id="GO:0030145">
    <property type="term" value="F:manganese ion binding"/>
    <property type="evidence" value="ECO:0000266"/>
    <property type="project" value="RGD"/>
</dbReference>
<dbReference type="GO" id="GO:0008499">
    <property type="term" value="F:N-acetyl-beta-D-glucosaminide beta-(1,3)-galactosyltransferase activity"/>
    <property type="evidence" value="ECO:0000266"/>
    <property type="project" value="RGD"/>
</dbReference>
<dbReference type="GO" id="GO:0000166">
    <property type="term" value="F:nucleotide binding"/>
    <property type="evidence" value="ECO:0000266"/>
    <property type="project" value="RGD"/>
</dbReference>
<dbReference type="GO" id="GO:0005975">
    <property type="term" value="P:carbohydrate metabolic process"/>
    <property type="evidence" value="ECO:0000266"/>
    <property type="project" value="RGD"/>
</dbReference>
<dbReference type="GO" id="GO:0030259">
    <property type="term" value="P:lipid glycosylation"/>
    <property type="evidence" value="ECO:0000318"/>
    <property type="project" value="GO_Central"/>
</dbReference>
<dbReference type="GO" id="GO:0043066">
    <property type="term" value="P:negative regulation of apoptotic process"/>
    <property type="evidence" value="ECO:0000315"/>
    <property type="project" value="RGD"/>
</dbReference>
<dbReference type="GO" id="GO:0009312">
    <property type="term" value="P:oligosaccharide biosynthetic process"/>
    <property type="evidence" value="ECO:0000266"/>
    <property type="project" value="RGD"/>
</dbReference>
<dbReference type="GO" id="GO:0008284">
    <property type="term" value="P:positive regulation of cell population proliferation"/>
    <property type="evidence" value="ECO:0000315"/>
    <property type="project" value="RGD"/>
</dbReference>
<dbReference type="GO" id="GO:0006486">
    <property type="term" value="P:protein glycosylation"/>
    <property type="evidence" value="ECO:0007669"/>
    <property type="project" value="UniProtKB-UniPathway"/>
</dbReference>
<dbReference type="GO" id="GO:0009624">
    <property type="term" value="P:response to nematode"/>
    <property type="evidence" value="ECO:0000270"/>
    <property type="project" value="RGD"/>
</dbReference>
<dbReference type="GO" id="GO:0032526">
    <property type="term" value="P:response to retinoic acid"/>
    <property type="evidence" value="ECO:0000270"/>
    <property type="project" value="RGD"/>
</dbReference>
<dbReference type="CDD" id="cd02515">
    <property type="entry name" value="Glyco_transf_6"/>
    <property type="match status" value="1"/>
</dbReference>
<dbReference type="FunFam" id="3.90.550.10:FF:000022">
    <property type="entry name" value="Histo-blood group ABO system transferase"/>
    <property type="match status" value="1"/>
</dbReference>
<dbReference type="Gene3D" id="3.90.550.10">
    <property type="entry name" value="Spore Coat Polysaccharide Biosynthesis Protein SpsA, Chain A"/>
    <property type="match status" value="1"/>
</dbReference>
<dbReference type="InterPro" id="IPR005076">
    <property type="entry name" value="Glyco_trans_6"/>
</dbReference>
<dbReference type="InterPro" id="IPR029044">
    <property type="entry name" value="Nucleotide-diphossugar_trans"/>
</dbReference>
<dbReference type="PANTHER" id="PTHR10462">
    <property type="entry name" value="GLYCOSYLTRANSFERASE-RELATED"/>
    <property type="match status" value="1"/>
</dbReference>
<dbReference type="PANTHER" id="PTHR10462:SF29">
    <property type="entry name" value="HISTO-BLOOD GROUP ABO SYSTEM TRANSFERASE"/>
    <property type="match status" value="1"/>
</dbReference>
<dbReference type="Pfam" id="PF03414">
    <property type="entry name" value="Glyco_transf_6"/>
    <property type="match status" value="1"/>
</dbReference>
<dbReference type="SUPFAM" id="SSF53448">
    <property type="entry name" value="Nucleotide-diphospho-sugar transferases"/>
    <property type="match status" value="1"/>
</dbReference>
<accession>Q8CFC4</accession>
<comment type="function">
    <text evidence="7">Possesses strong B transferase activity and weak A transferase activity.</text>
</comment>
<comment type="catalytic activity">
    <reaction evidence="3">
        <text>an alpha-L-fucosyl-(1-&gt;2)-beta-D-galactosyl derivative + UDP-N-acetyl-alpha-D-galactosamine = an N-acetyl-alpha-D-galactosaminyl-(1-&gt;3)-[alpha-L-fucosyl-(1-&gt;2)]-beta-D-galactosyl derivative + UDP + H(+)</text>
        <dbReference type="Rhea" id="RHEA:19021"/>
        <dbReference type="ChEBI" id="CHEBI:15378"/>
        <dbReference type="ChEBI" id="CHEBI:58223"/>
        <dbReference type="ChEBI" id="CHEBI:67138"/>
        <dbReference type="ChEBI" id="CHEBI:140327"/>
        <dbReference type="ChEBI" id="CHEBI:140559"/>
        <dbReference type="EC" id="2.4.1.40"/>
    </reaction>
</comment>
<comment type="catalytic activity">
    <reaction evidence="3">
        <text>an alpha-L-fucosyl-(1-&gt;2)-beta-D-galactosyl derivative + UDP-alpha-D-galactose = an alpha-D-galactosyl-(1-&gt;3)-[alpha-L-fucosyl-(1-&gt;2)]-beta-D-galactosyl derivative + UDP + H(+)</text>
        <dbReference type="Rhea" id="RHEA:14349"/>
        <dbReference type="ChEBI" id="CHEBI:15378"/>
        <dbReference type="ChEBI" id="CHEBI:58223"/>
        <dbReference type="ChEBI" id="CHEBI:66914"/>
        <dbReference type="ChEBI" id="CHEBI:140327"/>
        <dbReference type="ChEBI" id="CHEBI:140328"/>
        <dbReference type="EC" id="2.4.1.37"/>
    </reaction>
</comment>
<comment type="cofactor">
    <cofactor evidence="3">
        <name>Mn(2+)</name>
        <dbReference type="ChEBI" id="CHEBI:29035"/>
    </cofactor>
    <text evidence="3">Binds 1 Mn(2+) ion per subunit.</text>
</comment>
<comment type="pathway">
    <text evidence="3">Protein modification; protein glycosylation.</text>
</comment>
<comment type="subcellular location">
    <subcellularLocation>
        <location>Golgi apparatus</location>
        <location>Golgi stack membrane</location>
        <topology>Single-pass type II membrane protein</topology>
    </subcellularLocation>
    <subcellularLocation>
        <location>Secreted</location>
    </subcellularLocation>
    <text evidence="1">Membrane-bound form in trans cisternae of Golgi. Secreted into the body fluid (By similarity).</text>
</comment>
<comment type="tissue specificity">
    <text evidence="5 6 7">Large intestine, caecum, stomach, pancreas, submaxillary gland and kidney (at protein level). Ubiquitous.</text>
</comment>
<comment type="domain">
    <text>The conserved DXD motif is involved in cofactor binding. The manganese ion interacts with the beta-phosphate group of UDP and may also have a role in catalysis.</text>
</comment>
<comment type="similarity">
    <text evidence="8">Belongs to the glycosyltransferase 6 family.</text>
</comment>
<gene>
    <name type="primary">Abo2</name>
</gene>
<sequence>MKDLRFGRLKCYSLHLGILPLTVLVLVFFCFVCLSLRSQEWGHPGAVNRKAYPQPRVLTPTRTDVLVLTPWLAPIIWEGTFDIDTLNEQFRLRNTTIGLTVFAVKKYVVFLKLFLETAEQHFMVGHKVIYYVFTDRPADVPQVPLGAGRRLVVLTVRNYTRWQDVSMHRMEVISHFSEQRFRHEVDYLVCADVDMKFRDHVGVEILSALFGTLHPGFYRSRRESFTYERRPQSQAYIPWDQGDFYYMGAFFGGSVVEVHHLTKACHQAMVEDQANGIEAVWHDESHLNKYLLYHKPTKVLSPEYMWDQQLLGWPSIMKKLRYVAVPKNHQAIRN</sequence>
<protein>
    <recommendedName>
        <fullName>Histo-blood group ABO system transferase 2</fullName>
    </recommendedName>
    <alternativeName>
        <fullName>B blood group galactosyltransferase</fullName>
    </alternativeName>
    <alternativeName>
        <fullName>Blood group A glycosyltransferase 2</fullName>
    </alternativeName>
    <alternativeName>
        <fullName>Cis-AB transferase 2</fullName>
    </alternativeName>
    <alternativeName>
        <fullName>Fucosylglycoprotein 3-alpha-galactosyltransferase</fullName>
    </alternativeName>
    <alternativeName>
        <fullName>Fucosylglycoprotein alpha-N-acetylgalactosaminyltransferase</fullName>
    </alternativeName>
    <alternativeName>
        <fullName>Glycoprotein-fucosylgalactoside alpha-N-acetylgalactosaminyltransferase</fullName>
        <ecNumber evidence="3">2.4.1.40</ecNumber>
    </alternativeName>
    <alternativeName>
        <fullName>Glycoprotein-fucosylgalactoside alpha-galactosyltransferase</fullName>
        <ecNumber evidence="3">2.4.1.37</ecNumber>
    </alternativeName>
    <alternativeName>
        <fullName>Histo-blood group A transferase</fullName>
        <shortName>A transferase</shortName>
    </alternativeName>
    <alternativeName>
        <fullName>Histo-blood group B transferase</fullName>
        <shortName>B transferase</shortName>
    </alternativeName>
    <alternativeName>
        <fullName>NAGAT 2</fullName>
    </alternativeName>
    <alternativeName>
        <fullName>Putative blood group A transferase T2</fullName>
    </alternativeName>
</protein>
<feature type="chain" id="PRO_0000356180" description="Histo-blood group ABO system transferase 2">
    <location>
        <begin position="1"/>
        <end position="334"/>
    </location>
</feature>
<feature type="topological domain" description="Cytoplasmic" evidence="4">
    <location>
        <begin position="1"/>
        <end position="15"/>
    </location>
</feature>
<feature type="transmembrane region" description="Helical; Signal-anchor for type II membrane protein" evidence="4">
    <location>
        <begin position="16"/>
        <end position="36"/>
    </location>
</feature>
<feature type="topological domain" description="Lumenal" evidence="4">
    <location>
        <begin position="37"/>
        <end position="334"/>
    </location>
</feature>
<feature type="active site" description="Nucleophile" evidence="2">
    <location>
        <position position="284"/>
    </location>
</feature>
<feature type="binding site" evidence="3">
    <location>
        <begin position="102"/>
        <end position="104"/>
    </location>
    <ligand>
        <name>UDP-N-acetyl-alpha-D-galactosamine</name>
        <dbReference type="ChEBI" id="CHEBI:67138"/>
    </ligand>
</feature>
<feature type="binding site" evidence="3">
    <location>
        <position position="107"/>
    </location>
    <ligand>
        <name>UDP-N-acetyl-alpha-D-galactosamine</name>
        <dbReference type="ChEBI" id="CHEBI:67138"/>
    </ligand>
</feature>
<feature type="binding site" evidence="3">
    <location>
        <begin position="192"/>
        <end position="194"/>
    </location>
    <ligand>
        <name>UDP-N-acetyl-alpha-D-galactosamine</name>
        <dbReference type="ChEBI" id="CHEBI:67138"/>
    </ligand>
</feature>
<feature type="binding site" evidence="2">
    <location>
        <position position="192"/>
    </location>
    <ligand>
        <name>Mn(2+)</name>
        <dbReference type="ChEBI" id="CHEBI:29035"/>
    </ligand>
</feature>
<feature type="binding site" evidence="2">
    <location>
        <position position="194"/>
    </location>
    <ligand>
        <name>Mn(2+)</name>
        <dbReference type="ChEBI" id="CHEBI:29035"/>
    </ligand>
</feature>
<feature type="binding site" evidence="3">
    <location>
        <position position="214"/>
    </location>
    <ligand>
        <name>an alpha-L-fucosyl-(1-&gt;2)-beta-D-galactosyl derivative</name>
        <dbReference type="ChEBI" id="CHEBI:140327"/>
    </ligand>
</feature>
<feature type="binding site" evidence="3">
    <location>
        <position position="226"/>
    </location>
    <ligand>
        <name>an alpha-L-fucosyl-(1-&gt;2)-beta-D-galactosyl derivative</name>
        <dbReference type="ChEBI" id="CHEBI:140327"/>
    </ligand>
</feature>
<feature type="binding site" evidence="3">
    <location>
        <position position="284"/>
    </location>
    <ligand>
        <name>an alpha-L-fucosyl-(1-&gt;2)-beta-D-galactosyl derivative</name>
        <dbReference type="ChEBI" id="CHEBI:140327"/>
    </ligand>
</feature>
<feature type="binding site" evidence="3">
    <location>
        <position position="307"/>
    </location>
    <ligand>
        <name>an alpha-L-fucosyl-(1-&gt;2)-beta-D-galactosyl derivative</name>
        <dbReference type="ChEBI" id="CHEBI:140327"/>
    </ligand>
</feature>
<feature type="glycosylation site" description="N-linked (GlcNAc...) asparagine" evidence="4">
    <location>
        <position position="94"/>
    </location>
</feature>
<organism>
    <name type="scientific">Rattus norvegicus</name>
    <name type="common">Rat</name>
    <dbReference type="NCBI Taxonomy" id="10116"/>
    <lineage>
        <taxon>Eukaryota</taxon>
        <taxon>Metazoa</taxon>
        <taxon>Chordata</taxon>
        <taxon>Craniata</taxon>
        <taxon>Vertebrata</taxon>
        <taxon>Euteleostomi</taxon>
        <taxon>Mammalia</taxon>
        <taxon>Eutheria</taxon>
        <taxon>Euarchontoglires</taxon>
        <taxon>Glires</taxon>
        <taxon>Rodentia</taxon>
        <taxon>Myomorpha</taxon>
        <taxon>Muroidea</taxon>
        <taxon>Muridae</taxon>
        <taxon>Murinae</taxon>
        <taxon>Rattus</taxon>
    </lineage>
</organism>
<name>BGAT2_RAT</name>
<reference key="1">
    <citation type="journal article" date="2002" name="J. Biol. Chem.">
        <title>Rat encodes the paralogous gene equivalent of the human histo-blood group ABO gene. Association with antigen expression by overexpression of human ABO transferase.</title>
        <authorList>
            <person name="Iwamoto S."/>
            <person name="Kumada M."/>
            <person name="Kamesaki T."/>
            <person name="Okuda H."/>
            <person name="Kajii E."/>
            <person name="Inagaki T."/>
            <person name="Saikawa D."/>
            <person name="Takeuchi K."/>
            <person name="Ohgawara S."/>
            <person name="Takahashi R."/>
            <person name="Ueda S."/>
            <person name="Inoue S."/>
            <person name="Tahara K."/>
            <person name="Hakamata Y."/>
            <person name="Kobayashi E."/>
        </authorList>
    </citation>
    <scope>NUCLEOTIDE SEQUENCE [MRNA]</scope>
    <scope>TISSUE SPECIFICITY</scope>
    <source>
        <strain>Wistar</strain>
    </source>
</reference>
<reference key="2">
    <citation type="journal article" date="2003" name="Glycobiology">
        <title>Cloning of a rat gene encoding the histo-blood group B enzyme: rats have more than one Abo gene.</title>
        <authorList>
            <person name="Turcot A.-L."/>
            <person name="Blancher A."/>
            <person name="Le Moullac-Vaidye B."/>
            <person name="Despiau S."/>
            <person name="Rocher J."/>
            <person name="Roubinet F."/>
            <person name="Szpirer C."/>
            <person name="Le Pendu J."/>
        </authorList>
    </citation>
    <scope>NUCLEOTIDE SEQUENCE [MRNA]</scope>
    <scope>FUNCTION</scope>
    <scope>TISSUE SPECIFICITY</scope>
    <source>
        <tissue>Testis</tissue>
    </source>
</reference>
<reference key="3">
    <citation type="journal article" date="2002" name="Eur. J. Biochem.">
        <title>Cloning of a rat gene encoding the histo-blood group A enzyme. Tissue expression of the gene and of the A and B antigens.</title>
        <authorList>
            <person name="Cailleau-Thomas A."/>
            <person name="Le Moullac-Vaidye B."/>
            <person name="Rocher J."/>
            <person name="Bouhours D."/>
            <person name="Szpirer C."/>
            <person name="Le Pendu J."/>
        </authorList>
    </citation>
    <scope>TISSUE SPECIFICITY</scope>
</reference>
<evidence type="ECO:0000250" key="1"/>
<evidence type="ECO:0000250" key="2">
    <source>
        <dbReference type="UniProtKB" id="P14769"/>
    </source>
</evidence>
<evidence type="ECO:0000250" key="3">
    <source>
        <dbReference type="UniProtKB" id="P16442"/>
    </source>
</evidence>
<evidence type="ECO:0000255" key="4"/>
<evidence type="ECO:0000269" key="5">
    <source>
    </source>
</evidence>
<evidence type="ECO:0000269" key="6">
    <source>
    </source>
</evidence>
<evidence type="ECO:0000269" key="7">
    <source>
    </source>
</evidence>
<evidence type="ECO:0000305" key="8"/>
<keyword id="KW-0325">Glycoprotein</keyword>
<keyword id="KW-0328">Glycosyltransferase</keyword>
<keyword id="KW-0333">Golgi apparatus</keyword>
<keyword id="KW-0464">Manganese</keyword>
<keyword id="KW-0472">Membrane</keyword>
<keyword id="KW-0479">Metal-binding</keyword>
<keyword id="KW-1185">Reference proteome</keyword>
<keyword id="KW-0964">Secreted</keyword>
<keyword id="KW-0735">Signal-anchor</keyword>
<keyword id="KW-0808">Transferase</keyword>
<keyword id="KW-0812">Transmembrane</keyword>
<keyword id="KW-1133">Transmembrane helix</keyword>